<proteinExistence type="evidence at protein level"/>
<reference key="1">
    <citation type="journal article" date="1993" name="Gene">
        <title>Isolation and characterization of a full-length trypsin-encoding cDNA clone from the Lepidopteran insect, Choristoneura fumiferana.</title>
        <authorList>
            <person name="Wang S."/>
            <person name="Magoulas C."/>
            <person name="Hickey D.A."/>
        </authorList>
    </citation>
    <scope>NUCLEOTIDE SEQUENCE [MRNA]</scope>
</reference>
<reference key="2">
    <citation type="journal article" date="1993" name="Insect Biochem. Mol. Biol.">
        <title>Purification and characterization of a trypsin-like digestive enzyme from spruce budworm (Choristoneura fumiferana) responsible for the activation of delta-endotoxin from Bacillus thuringiensis.</title>
        <authorList>
            <person name="Milne R."/>
            <person name="Kaplan H."/>
        </authorList>
    </citation>
    <scope>PROTEIN SEQUENCE OF 25-69</scope>
    <scope>CHARACTERIZATION</scope>
    <source>
        <tissue>Gut juice</tissue>
    </source>
</reference>
<organism>
    <name type="scientific">Choristoneura fumiferana</name>
    <name type="common">Spruce budworm moth</name>
    <name type="synonym">Archips fumiferana</name>
    <dbReference type="NCBI Taxonomy" id="7141"/>
    <lineage>
        <taxon>Eukaryota</taxon>
        <taxon>Metazoa</taxon>
        <taxon>Ecdysozoa</taxon>
        <taxon>Arthropoda</taxon>
        <taxon>Hexapoda</taxon>
        <taxon>Insecta</taxon>
        <taxon>Pterygota</taxon>
        <taxon>Neoptera</taxon>
        <taxon>Endopterygota</taxon>
        <taxon>Lepidoptera</taxon>
        <taxon>Glossata</taxon>
        <taxon>Ditrysia</taxon>
        <taxon>Tortricoidea</taxon>
        <taxon>Tortricidae</taxon>
        <taxon>Tortricinae</taxon>
        <taxon>Choristoneura</taxon>
    </lineage>
</organism>
<feature type="signal peptide" evidence="2">
    <location>
        <begin position="1"/>
        <end position="17"/>
    </location>
</feature>
<feature type="propeptide" id="PRO_0000028257" description="Activation peptide" evidence="4">
    <location>
        <begin position="18"/>
        <end position="24"/>
    </location>
</feature>
<feature type="chain" id="PRO_0000028258" description="Trypsin CFT-1">
    <location>
        <begin position="25"/>
        <end position="256"/>
    </location>
</feature>
<feature type="domain" description="Peptidase S1" evidence="3">
    <location>
        <begin position="25"/>
        <end position="256"/>
    </location>
</feature>
<feature type="active site" description="Charge relay system" evidence="1">
    <location>
        <position position="70"/>
    </location>
</feature>
<feature type="active site" description="Charge relay system" evidence="1">
    <location>
        <position position="115"/>
    </location>
</feature>
<feature type="active site" description="Charge relay system" evidence="1">
    <location>
        <position position="213"/>
    </location>
</feature>
<feature type="site" description="Required for specificity" evidence="1">
    <location>
        <position position="207"/>
    </location>
</feature>
<feature type="disulfide bond" evidence="3">
    <location>
        <begin position="55"/>
        <end position="71"/>
    </location>
</feature>
<feature type="disulfide bond" evidence="3">
    <location>
        <begin position="180"/>
        <end position="197"/>
    </location>
</feature>
<feature type="disulfide bond" evidence="3">
    <location>
        <begin position="209"/>
        <end position="233"/>
    </location>
</feature>
<protein>
    <recommendedName>
        <fullName>Trypsin CFT-1</fullName>
        <ecNumber>3.4.21.4</ecNumber>
    </recommendedName>
</protein>
<comment type="function">
    <text>Responsible for the activation of delta-endotoxin from Bacillus thuringiensis.</text>
</comment>
<comment type="catalytic activity">
    <reaction>
        <text>Preferential cleavage: Arg-|-Xaa, Lys-|-Xaa.</text>
        <dbReference type="EC" id="3.4.21.4"/>
    </reaction>
</comment>
<comment type="subcellular location">
    <subcellularLocation>
        <location>Secreted</location>
        <location>Extracellular space</location>
    </subcellularLocation>
</comment>
<comment type="similarity">
    <text evidence="3">Belongs to the peptidase S1 family.</text>
</comment>
<sequence>MRVTLALVALCLASVAALPEKQQRIVGGSVTTIEQWPSGSALLYSWNLVTYSQACGGAILNTRSILSAAHCFIGDAANRWRIRTGSTWANSGGVVHNTALIIIHPSYNTRTLDNDIAILRSATTIAQNNQARPASIAGANYNLADNQAVWAIGWGATCPGCAGSEQLRHIQIWTVNQNTCRSRYLEVGGTITDNMLCSGWLDVGGRDQCQGDSGGPLFHNNVVVGVCSWGQSCALARYPGVNARVSRFTAWIQANA</sequence>
<accession>P35042</accession>
<dbReference type="EC" id="3.4.21.4"/>
<dbReference type="EMBL" id="L04749">
    <property type="protein sequence ID" value="AAA81525.1"/>
    <property type="molecule type" value="mRNA"/>
</dbReference>
<dbReference type="SMR" id="P35042"/>
<dbReference type="MEROPS" id="S01.112"/>
<dbReference type="GO" id="GO:0005576">
    <property type="term" value="C:extracellular region"/>
    <property type="evidence" value="ECO:0007669"/>
    <property type="project" value="UniProtKB-SubCell"/>
</dbReference>
<dbReference type="GO" id="GO:0004252">
    <property type="term" value="F:serine-type endopeptidase activity"/>
    <property type="evidence" value="ECO:0007669"/>
    <property type="project" value="UniProtKB-EC"/>
</dbReference>
<dbReference type="GO" id="GO:0006508">
    <property type="term" value="P:proteolysis"/>
    <property type="evidence" value="ECO:0007669"/>
    <property type="project" value="UniProtKB-KW"/>
</dbReference>
<dbReference type="CDD" id="cd00190">
    <property type="entry name" value="Tryp_SPc"/>
    <property type="match status" value="1"/>
</dbReference>
<dbReference type="FunFam" id="2.40.10.10:FF:000002">
    <property type="entry name" value="Transmembrane protease serine"/>
    <property type="match status" value="1"/>
</dbReference>
<dbReference type="Gene3D" id="2.40.10.10">
    <property type="entry name" value="Trypsin-like serine proteases"/>
    <property type="match status" value="1"/>
</dbReference>
<dbReference type="InterPro" id="IPR050430">
    <property type="entry name" value="Peptidase_S1"/>
</dbReference>
<dbReference type="InterPro" id="IPR009003">
    <property type="entry name" value="Peptidase_S1_PA"/>
</dbReference>
<dbReference type="InterPro" id="IPR043504">
    <property type="entry name" value="Peptidase_S1_PA_chymotrypsin"/>
</dbReference>
<dbReference type="InterPro" id="IPR001314">
    <property type="entry name" value="Peptidase_S1A"/>
</dbReference>
<dbReference type="InterPro" id="IPR001254">
    <property type="entry name" value="Trypsin_dom"/>
</dbReference>
<dbReference type="InterPro" id="IPR018114">
    <property type="entry name" value="TRYPSIN_HIS"/>
</dbReference>
<dbReference type="InterPro" id="IPR033116">
    <property type="entry name" value="TRYPSIN_SER"/>
</dbReference>
<dbReference type="PANTHER" id="PTHR24276:SF98">
    <property type="entry name" value="FI18310P1-RELATED"/>
    <property type="match status" value="1"/>
</dbReference>
<dbReference type="PANTHER" id="PTHR24276">
    <property type="entry name" value="POLYSERASE-RELATED"/>
    <property type="match status" value="1"/>
</dbReference>
<dbReference type="Pfam" id="PF00089">
    <property type="entry name" value="Trypsin"/>
    <property type="match status" value="1"/>
</dbReference>
<dbReference type="PRINTS" id="PR00722">
    <property type="entry name" value="CHYMOTRYPSIN"/>
</dbReference>
<dbReference type="SMART" id="SM00020">
    <property type="entry name" value="Tryp_SPc"/>
    <property type="match status" value="1"/>
</dbReference>
<dbReference type="SUPFAM" id="SSF50494">
    <property type="entry name" value="Trypsin-like serine proteases"/>
    <property type="match status" value="1"/>
</dbReference>
<dbReference type="PROSITE" id="PS50240">
    <property type="entry name" value="TRYPSIN_DOM"/>
    <property type="match status" value="1"/>
</dbReference>
<dbReference type="PROSITE" id="PS00134">
    <property type="entry name" value="TRYPSIN_HIS"/>
    <property type="match status" value="1"/>
</dbReference>
<dbReference type="PROSITE" id="PS00135">
    <property type="entry name" value="TRYPSIN_SER"/>
    <property type="match status" value="1"/>
</dbReference>
<keyword id="KW-0903">Direct protein sequencing</keyword>
<keyword id="KW-1015">Disulfide bond</keyword>
<keyword id="KW-0378">Hydrolase</keyword>
<keyword id="KW-0645">Protease</keyword>
<keyword id="KW-0964">Secreted</keyword>
<keyword id="KW-0720">Serine protease</keyword>
<keyword id="KW-0732">Signal</keyword>
<keyword id="KW-0865">Zymogen</keyword>
<evidence type="ECO:0000250" key="1"/>
<evidence type="ECO:0000255" key="2"/>
<evidence type="ECO:0000255" key="3">
    <source>
        <dbReference type="PROSITE-ProRule" id="PRU00274"/>
    </source>
</evidence>
<evidence type="ECO:0000269" key="4">
    <source>
    </source>
</evidence>
<name>TRYP_CHOFU</name>